<accession>B5RGC1</accession>
<dbReference type="EMBL" id="AM933173">
    <property type="protein sequence ID" value="CAR35998.1"/>
    <property type="molecule type" value="Genomic_DNA"/>
</dbReference>
<dbReference type="RefSeq" id="WP_000610894.1">
    <property type="nucleotide sequence ID" value="NC_011274.1"/>
</dbReference>
<dbReference type="SMR" id="B5RGC1"/>
<dbReference type="GeneID" id="66754612"/>
<dbReference type="KEGG" id="seg:SG0091"/>
<dbReference type="HOGENOM" id="CLU_128074_0_0_6"/>
<dbReference type="Proteomes" id="UP000008321">
    <property type="component" value="Chromosome"/>
</dbReference>
<dbReference type="GO" id="GO:0070987">
    <property type="term" value="P:error-free translesion synthesis"/>
    <property type="evidence" value="ECO:0007669"/>
    <property type="project" value="TreeGrafter"/>
</dbReference>
<dbReference type="Gene3D" id="2.60.40.1470">
    <property type="entry name" value="ApaG domain"/>
    <property type="match status" value="1"/>
</dbReference>
<dbReference type="HAMAP" id="MF_00791">
    <property type="entry name" value="ApaG"/>
    <property type="match status" value="1"/>
</dbReference>
<dbReference type="InterPro" id="IPR007474">
    <property type="entry name" value="ApaG_domain"/>
</dbReference>
<dbReference type="InterPro" id="IPR036767">
    <property type="entry name" value="ApaG_sf"/>
</dbReference>
<dbReference type="InterPro" id="IPR023065">
    <property type="entry name" value="Uncharacterised_ApaG"/>
</dbReference>
<dbReference type="NCBIfam" id="NF003967">
    <property type="entry name" value="PRK05461.1"/>
    <property type="match status" value="1"/>
</dbReference>
<dbReference type="PANTHER" id="PTHR14289">
    <property type="entry name" value="F-BOX ONLY PROTEIN 3"/>
    <property type="match status" value="1"/>
</dbReference>
<dbReference type="PANTHER" id="PTHR14289:SF16">
    <property type="entry name" value="POLYMERASE DELTA-INTERACTING PROTEIN 2"/>
    <property type="match status" value="1"/>
</dbReference>
<dbReference type="Pfam" id="PF04379">
    <property type="entry name" value="DUF525"/>
    <property type="match status" value="1"/>
</dbReference>
<dbReference type="SUPFAM" id="SSF110069">
    <property type="entry name" value="ApaG-like"/>
    <property type="match status" value="1"/>
</dbReference>
<dbReference type="PROSITE" id="PS51087">
    <property type="entry name" value="APAG"/>
    <property type="match status" value="1"/>
</dbReference>
<sequence>MINSPRVCIQVQSVYIEAQSSPDDERYVFAYTVTIRNLGRAPVQLLGRYWLITNGHGRETEVQGEGVVGVQPRIAPGEEYQYTSGAVIETPLGTMQGHYEMIDENGDAFTIDIPVFRLAVPTLIH</sequence>
<feature type="chain" id="PRO_1000133810" description="Protein ApaG">
    <location>
        <begin position="1"/>
        <end position="125"/>
    </location>
</feature>
<feature type="domain" description="ApaG" evidence="1">
    <location>
        <begin position="1"/>
        <end position="125"/>
    </location>
</feature>
<protein>
    <recommendedName>
        <fullName evidence="1">Protein ApaG</fullName>
    </recommendedName>
</protein>
<proteinExistence type="inferred from homology"/>
<organism>
    <name type="scientific">Salmonella gallinarum (strain 287/91 / NCTC 13346)</name>
    <dbReference type="NCBI Taxonomy" id="550538"/>
    <lineage>
        <taxon>Bacteria</taxon>
        <taxon>Pseudomonadati</taxon>
        <taxon>Pseudomonadota</taxon>
        <taxon>Gammaproteobacteria</taxon>
        <taxon>Enterobacterales</taxon>
        <taxon>Enterobacteriaceae</taxon>
        <taxon>Salmonella</taxon>
    </lineage>
</organism>
<reference key="1">
    <citation type="journal article" date="2008" name="Genome Res.">
        <title>Comparative genome analysis of Salmonella enteritidis PT4 and Salmonella gallinarum 287/91 provides insights into evolutionary and host adaptation pathways.</title>
        <authorList>
            <person name="Thomson N.R."/>
            <person name="Clayton D.J."/>
            <person name="Windhorst D."/>
            <person name="Vernikos G."/>
            <person name="Davidson S."/>
            <person name="Churcher C."/>
            <person name="Quail M.A."/>
            <person name="Stevens M."/>
            <person name="Jones M.A."/>
            <person name="Watson M."/>
            <person name="Barron A."/>
            <person name="Layton A."/>
            <person name="Pickard D."/>
            <person name="Kingsley R.A."/>
            <person name="Bignell A."/>
            <person name="Clark L."/>
            <person name="Harris B."/>
            <person name="Ormond D."/>
            <person name="Abdellah Z."/>
            <person name="Brooks K."/>
            <person name="Cherevach I."/>
            <person name="Chillingworth T."/>
            <person name="Woodward J."/>
            <person name="Norberczak H."/>
            <person name="Lord A."/>
            <person name="Arrowsmith C."/>
            <person name="Jagels K."/>
            <person name="Moule S."/>
            <person name="Mungall K."/>
            <person name="Saunders M."/>
            <person name="Whitehead S."/>
            <person name="Chabalgoity J.A."/>
            <person name="Maskell D."/>
            <person name="Humphreys T."/>
            <person name="Roberts M."/>
            <person name="Barrow P.A."/>
            <person name="Dougan G."/>
            <person name="Parkhill J."/>
        </authorList>
    </citation>
    <scope>NUCLEOTIDE SEQUENCE [LARGE SCALE GENOMIC DNA]</scope>
    <source>
        <strain>287/91 / NCTC 13346</strain>
    </source>
</reference>
<gene>
    <name evidence="1" type="primary">apaG</name>
    <name type="ordered locus">SG0091</name>
</gene>
<evidence type="ECO:0000255" key="1">
    <source>
        <dbReference type="HAMAP-Rule" id="MF_00791"/>
    </source>
</evidence>
<name>APAG_SALG2</name>